<name>Y1812_MYCTO</name>
<reference key="1">
    <citation type="journal article" date="2002" name="J. Bacteriol.">
        <title>Whole-genome comparison of Mycobacterium tuberculosis clinical and laboratory strains.</title>
        <authorList>
            <person name="Fleischmann R.D."/>
            <person name="Alland D."/>
            <person name="Eisen J.A."/>
            <person name="Carpenter L."/>
            <person name="White O."/>
            <person name="Peterson J.D."/>
            <person name="DeBoy R.T."/>
            <person name="Dodson R.J."/>
            <person name="Gwinn M.L."/>
            <person name="Haft D.H."/>
            <person name="Hickey E.K."/>
            <person name="Kolonay J.F."/>
            <person name="Nelson W.C."/>
            <person name="Umayam L.A."/>
            <person name="Ermolaeva M.D."/>
            <person name="Salzberg S.L."/>
            <person name="Delcher A."/>
            <person name="Utterback T.R."/>
            <person name="Weidman J.F."/>
            <person name="Khouri H.M."/>
            <person name="Gill J."/>
            <person name="Mikula A."/>
            <person name="Bishai W."/>
            <person name="Jacobs W.R. Jr."/>
            <person name="Venter J.C."/>
            <person name="Fraser C.M."/>
        </authorList>
    </citation>
    <scope>NUCLEOTIDE SEQUENCE [LARGE SCALE GENOMIC DNA]</scope>
    <source>
        <strain>CDC 1551 / Oshkosh</strain>
    </source>
</reference>
<reference key="2">
    <citation type="journal article" date="2003" name="J. Exp. Med.">
        <title>Inhibition of respiration by nitric oxide induces a Mycobacterium tuberculosis dormancy program.</title>
        <authorList>
            <person name="Voskuil M.I."/>
            <person name="Schnappinger D."/>
            <person name="Visconti K.C."/>
            <person name="Harrell M.I."/>
            <person name="Dolganov G.M."/>
            <person name="Sherman D.R."/>
            <person name="Schoolnik G.K."/>
        </authorList>
    </citation>
    <scope>INDUCTION BY NITRIC OXIDE (NO) AND BY HYPOXIA</scope>
    <scope>DORMANCY REGULON</scope>
    <source>
        <strain>CDC 1551 / Oshkosh</strain>
    </source>
</reference>
<evidence type="ECO:0000250" key="1"/>
<evidence type="ECO:0000269" key="2">
    <source>
    </source>
</evidence>
<evidence type="ECO:0000305" key="3"/>
<organism>
    <name type="scientific">Mycobacterium tuberculosis (strain CDC 1551 / Oshkosh)</name>
    <dbReference type="NCBI Taxonomy" id="83331"/>
    <lineage>
        <taxon>Bacteria</taxon>
        <taxon>Bacillati</taxon>
        <taxon>Actinomycetota</taxon>
        <taxon>Actinomycetes</taxon>
        <taxon>Mycobacteriales</taxon>
        <taxon>Mycobacteriaceae</taxon>
        <taxon>Mycobacterium</taxon>
        <taxon>Mycobacterium tuberculosis complex</taxon>
    </lineage>
</organism>
<comment type="cofactor">
    <cofactor evidence="1">
        <name>FAD</name>
        <dbReference type="ChEBI" id="CHEBI:57692"/>
    </cofactor>
    <text evidence="1">Binds 1 FAD per subunit.</text>
</comment>
<comment type="induction">
    <text evidence="2">A member of the dormancy regulon. Induced in response to reduced oxygen tension (hypoxia) and low levels of nitric oxide (NO).</text>
</comment>
<comment type="similarity">
    <text evidence="3">Belongs to the NADH dehydrogenase family.</text>
</comment>
<comment type="sequence caution" evidence="3">
    <conflict type="erroneous initiation">
        <sequence resource="EMBL-CDS" id="AAK46133"/>
    </conflict>
</comment>
<accession>P9WJJ0</accession>
<accession>L0T7Z1</accession>
<accession>O07220</accession>
<accession>Q8VJV9</accession>
<sequence>MTRVVVIGSGFAGLWAALGAARRLDELAVPAGTVDVMVVSNKPFHDIRVRNYEADLSACRIPLGDVLGPAGVAHVTAEVTAIDADGRRVTTSTGASYSYDRLVLASGSHVVKPALPGLAEFGFDVDTYDGAVRLQQHLQGLAGGPLTSAAATVVVVGAGLTGIETACELPGRLHALFARGDGVTPRVVLIDHNPFVGSDMGLSARPVIEQALLDNGVETRTGVSVAAVSPGGVTLSSGERLAAATVVWCAGMRASRLTEQLPVARDRLGRLQVDDYLRVIGVPAMFAAGDVAAARMDDEHLSVMSCQHGRPMGRYAGCNVINDLFDQPLLALRIPWYVTVLDLGSAGAVYTEGWERKVVSQGAPAKTTKQSINTRRIYPPLNGSRADLLAAAAPRVQPRP</sequence>
<feature type="chain" id="PRO_0000427821" description="NADH dehydrogenase-like protein MT1860">
    <location>
        <begin position="1"/>
        <end position="400"/>
    </location>
</feature>
<protein>
    <recommendedName>
        <fullName>NADH dehydrogenase-like protein MT1860</fullName>
        <ecNumber>1.6.-.-</ecNumber>
    </recommendedName>
</protein>
<gene>
    <name type="ordered locus">MT1860</name>
</gene>
<proteinExistence type="evidence at transcript level"/>
<keyword id="KW-0274">FAD</keyword>
<keyword id="KW-0285">Flavoprotein</keyword>
<keyword id="KW-0560">Oxidoreductase</keyword>
<keyword id="KW-1185">Reference proteome</keyword>
<dbReference type="EC" id="1.6.-.-"/>
<dbReference type="EMBL" id="AE000516">
    <property type="protein sequence ID" value="AAK46133.1"/>
    <property type="status" value="ALT_INIT"/>
    <property type="molecule type" value="Genomic_DNA"/>
</dbReference>
<dbReference type="PIR" id="F70982">
    <property type="entry name" value="F70982"/>
</dbReference>
<dbReference type="RefSeq" id="WP_003409193.1">
    <property type="nucleotide sequence ID" value="NZ_KK341227.1"/>
</dbReference>
<dbReference type="SMR" id="P9WJJ0"/>
<dbReference type="KEGG" id="mtc:MT1860"/>
<dbReference type="PATRIC" id="fig|83331.31.peg.2003"/>
<dbReference type="HOGENOM" id="CLU_021377_8_0_11"/>
<dbReference type="Proteomes" id="UP000001020">
    <property type="component" value="Chromosome"/>
</dbReference>
<dbReference type="GO" id="GO:0003955">
    <property type="term" value="F:NAD(P)H dehydrogenase (quinone) activity"/>
    <property type="evidence" value="ECO:0007669"/>
    <property type="project" value="TreeGrafter"/>
</dbReference>
<dbReference type="GO" id="GO:0019646">
    <property type="term" value="P:aerobic electron transport chain"/>
    <property type="evidence" value="ECO:0007669"/>
    <property type="project" value="TreeGrafter"/>
</dbReference>
<dbReference type="FunFam" id="3.50.50.100:FF:000020">
    <property type="entry name" value="NADH dehydrogenase"/>
    <property type="match status" value="1"/>
</dbReference>
<dbReference type="Gene3D" id="3.50.50.100">
    <property type="match status" value="1"/>
</dbReference>
<dbReference type="InterPro" id="IPR036188">
    <property type="entry name" value="FAD/NAD-bd_sf"/>
</dbReference>
<dbReference type="InterPro" id="IPR023753">
    <property type="entry name" value="FAD/NAD-binding_dom"/>
</dbReference>
<dbReference type="InterPro" id="IPR051169">
    <property type="entry name" value="NADH-Q_oxidoreductase"/>
</dbReference>
<dbReference type="PANTHER" id="PTHR42913:SF3">
    <property type="entry name" value="64 KDA MITOCHONDRIAL NADH DEHYDROGENASE (EUROFUNG)"/>
    <property type="match status" value="1"/>
</dbReference>
<dbReference type="PANTHER" id="PTHR42913">
    <property type="entry name" value="APOPTOSIS-INDUCING FACTOR 1"/>
    <property type="match status" value="1"/>
</dbReference>
<dbReference type="Pfam" id="PF07992">
    <property type="entry name" value="Pyr_redox_2"/>
    <property type="match status" value="1"/>
</dbReference>
<dbReference type="PRINTS" id="PR00368">
    <property type="entry name" value="FADPNR"/>
</dbReference>
<dbReference type="PRINTS" id="PR00469">
    <property type="entry name" value="PNDRDTASEII"/>
</dbReference>
<dbReference type="SUPFAM" id="SSF51905">
    <property type="entry name" value="FAD/NAD(P)-binding domain"/>
    <property type="match status" value="1"/>
</dbReference>